<evidence type="ECO:0000250" key="1">
    <source>
        <dbReference type="UniProtKB" id="P56780"/>
    </source>
</evidence>
<evidence type="ECO:0000255" key="2">
    <source>
        <dbReference type="HAMAP-Rule" id="MF_00752"/>
    </source>
</evidence>
<evidence type="ECO:0000256" key="3">
    <source>
        <dbReference type="SAM" id="MobiDB-lite"/>
    </source>
</evidence>
<gene>
    <name evidence="2" type="primary">psbH</name>
</gene>
<geneLocation type="chloroplast"/>
<comment type="function">
    <text evidence="2">One of the components of the core complex of photosystem II (PSII), required for its stability and/or assembly. PSII is a light-driven water:plastoquinone oxidoreductase that uses light energy to abstract electrons from H(2)O, generating O(2) and a proton gradient subsequently used for ATP formation. It consists of a core antenna complex that captures photons, and an electron transfer chain that converts photonic excitation into a charge separation.</text>
</comment>
<comment type="subunit">
    <text evidence="2">PSII is composed of 1 copy each of membrane proteins PsbA, PsbB, PsbC, PsbD, PsbE, PsbF, PsbH, PsbI, PsbJ, PsbK, PsbL, PsbM, PsbT, PsbX, PsbY, PsbZ, Psb30/Ycf12, at least 3 peripheral proteins of the oxygen-evolving complex and a large number of cofactors. It forms dimeric complexes.</text>
</comment>
<comment type="subcellular location">
    <subcellularLocation>
        <location evidence="2">Plastid</location>
        <location evidence="2">Chloroplast thylakoid membrane</location>
        <topology evidence="2">Single-pass membrane protein</topology>
    </subcellularLocation>
</comment>
<comment type="PTM">
    <text evidence="2">Phosphorylation is a light-dependent reaction catalyzed by a membrane-bound kinase; phosphorylation occurs on Thr residue(s) in the N-terminus of the protein.</text>
</comment>
<comment type="similarity">
    <text evidence="2">Belongs to the PsbH family.</text>
</comment>
<sequence length="73" mass="7737">MATQTVEGSSRSGPRRTLTGDLLKPLNSEYGKVAPGWGTTPFMGVAMALFAIFLSIILEIYNSSVLLDGISTS</sequence>
<accession>Q7YJU9</accession>
<protein>
    <recommendedName>
        <fullName evidence="2">Photosystem II reaction center protein H</fullName>
        <shortName evidence="2">PSII-H</shortName>
    </recommendedName>
    <alternativeName>
        <fullName evidence="2">Photosystem II 10 kDa phosphoprotein</fullName>
    </alternativeName>
</protein>
<feature type="initiator methionine" description="Removed" evidence="1">
    <location>
        <position position="1"/>
    </location>
</feature>
<feature type="chain" id="PRO_0000070500" description="Photosystem II reaction center protein H">
    <location>
        <begin position="2"/>
        <end position="73"/>
    </location>
</feature>
<feature type="transmembrane region" description="Helical" evidence="2">
    <location>
        <begin position="41"/>
        <end position="61"/>
    </location>
</feature>
<feature type="region of interest" description="Disordered" evidence="3">
    <location>
        <begin position="1"/>
        <end position="20"/>
    </location>
</feature>
<feature type="compositionally biased region" description="Polar residues" evidence="3">
    <location>
        <begin position="1"/>
        <end position="12"/>
    </location>
</feature>
<feature type="modified residue" description="Phosphothreonine" evidence="2">
    <location>
        <position position="3"/>
    </location>
</feature>
<feature type="modified residue" description="Phosphothreonine" evidence="2">
    <location>
        <position position="5"/>
    </location>
</feature>
<dbReference type="EMBL" id="AJ428413">
    <property type="protein sequence ID" value="CAD28749.1"/>
    <property type="molecule type" value="Genomic_DNA"/>
</dbReference>
<dbReference type="RefSeq" id="NP_862782.1">
    <property type="nucleotide sequence ID" value="NC_004993.1"/>
</dbReference>
<dbReference type="SMR" id="Q7YJU9"/>
<dbReference type="GeneID" id="2598012"/>
<dbReference type="GO" id="GO:0009535">
    <property type="term" value="C:chloroplast thylakoid membrane"/>
    <property type="evidence" value="ECO:0007669"/>
    <property type="project" value="UniProtKB-SubCell"/>
</dbReference>
<dbReference type="GO" id="GO:0009523">
    <property type="term" value="C:photosystem II"/>
    <property type="evidence" value="ECO:0007669"/>
    <property type="project" value="UniProtKB-KW"/>
</dbReference>
<dbReference type="GO" id="GO:0042301">
    <property type="term" value="F:phosphate ion binding"/>
    <property type="evidence" value="ECO:0007669"/>
    <property type="project" value="InterPro"/>
</dbReference>
<dbReference type="GO" id="GO:0015979">
    <property type="term" value="P:photosynthesis"/>
    <property type="evidence" value="ECO:0007669"/>
    <property type="project" value="UniProtKB-UniRule"/>
</dbReference>
<dbReference type="GO" id="GO:0050821">
    <property type="term" value="P:protein stabilization"/>
    <property type="evidence" value="ECO:0007669"/>
    <property type="project" value="InterPro"/>
</dbReference>
<dbReference type="FunFam" id="1.20.5.880:FF:000001">
    <property type="entry name" value="Photosystem II reaction center protein H"/>
    <property type="match status" value="1"/>
</dbReference>
<dbReference type="Gene3D" id="1.20.5.880">
    <property type="entry name" value="Photosystem II reaction center protein H"/>
    <property type="match status" value="1"/>
</dbReference>
<dbReference type="HAMAP" id="MF_00752">
    <property type="entry name" value="PSII_PsbH"/>
    <property type="match status" value="1"/>
</dbReference>
<dbReference type="InterPro" id="IPR001056">
    <property type="entry name" value="PSII_PsbH"/>
</dbReference>
<dbReference type="InterPro" id="IPR036863">
    <property type="entry name" value="PSII_PsbH_sf"/>
</dbReference>
<dbReference type="NCBIfam" id="NF002728">
    <property type="entry name" value="PRK02624.1"/>
    <property type="match status" value="1"/>
</dbReference>
<dbReference type="PANTHER" id="PTHR34469">
    <property type="entry name" value="PHOTOSYSTEM II REACTION CENTER PROTEIN H"/>
    <property type="match status" value="1"/>
</dbReference>
<dbReference type="PANTHER" id="PTHR34469:SF4">
    <property type="entry name" value="PHOTOSYSTEM II REACTION CENTER PROTEIN H"/>
    <property type="match status" value="1"/>
</dbReference>
<dbReference type="Pfam" id="PF00737">
    <property type="entry name" value="PsbH"/>
    <property type="match status" value="1"/>
</dbReference>
<dbReference type="SUPFAM" id="SSF161025">
    <property type="entry name" value="Photosystem II 10 kDa phosphoprotein PsbH"/>
    <property type="match status" value="1"/>
</dbReference>
<name>PSBH_CALFG</name>
<organism>
    <name type="scientific">Calycanthus floridus var. glaucus</name>
    <name type="common">Eastern sweetshrub</name>
    <name type="synonym">Calycanthus fertilis var. ferax</name>
    <dbReference type="NCBI Taxonomy" id="212734"/>
    <lineage>
        <taxon>Eukaryota</taxon>
        <taxon>Viridiplantae</taxon>
        <taxon>Streptophyta</taxon>
        <taxon>Embryophyta</taxon>
        <taxon>Tracheophyta</taxon>
        <taxon>Spermatophyta</taxon>
        <taxon>Magnoliopsida</taxon>
        <taxon>Magnoliidae</taxon>
        <taxon>Laurales</taxon>
        <taxon>Calycanthaceae</taxon>
        <taxon>Calycanthus</taxon>
    </lineage>
</organism>
<reference key="1">
    <citation type="journal article" date="2003" name="Plant Syst. Evol.">
        <title>The chloroplast genome of the 'basal' angiosperm Calycanthus fertilis -- structural and phylogenetic analyses.</title>
        <authorList>
            <person name="Goremykin V."/>
            <person name="Hirsch-Ernst K.I."/>
            <person name="Woelfl S."/>
            <person name="Hellwig F.H."/>
        </authorList>
    </citation>
    <scope>NUCLEOTIDE SEQUENCE [LARGE SCALE GENOMIC DNA]</scope>
</reference>
<proteinExistence type="inferred from homology"/>
<keyword id="KW-0150">Chloroplast</keyword>
<keyword id="KW-0472">Membrane</keyword>
<keyword id="KW-0597">Phosphoprotein</keyword>
<keyword id="KW-0602">Photosynthesis</keyword>
<keyword id="KW-0604">Photosystem II</keyword>
<keyword id="KW-0934">Plastid</keyword>
<keyword id="KW-0793">Thylakoid</keyword>
<keyword id="KW-0812">Transmembrane</keyword>
<keyword id="KW-1133">Transmembrane helix</keyword>